<dbReference type="EC" id="3.6.1.7"/>
<dbReference type="EMBL" id="CP000852">
    <property type="protein sequence ID" value="ABW02793.1"/>
    <property type="molecule type" value="Genomic_DNA"/>
</dbReference>
<dbReference type="RefSeq" id="WP_012187012.1">
    <property type="nucleotide sequence ID" value="NC_009954.1"/>
</dbReference>
<dbReference type="SMR" id="A8MC09"/>
<dbReference type="STRING" id="397948.Cmaq_1977"/>
<dbReference type="GeneID" id="5708573"/>
<dbReference type="KEGG" id="cma:Cmaq_1977"/>
<dbReference type="eggNOG" id="arCOG01674">
    <property type="taxonomic scope" value="Archaea"/>
</dbReference>
<dbReference type="HOGENOM" id="CLU_141932_1_2_2"/>
<dbReference type="OrthoDB" id="6643at2157"/>
<dbReference type="Proteomes" id="UP000001137">
    <property type="component" value="Chromosome"/>
</dbReference>
<dbReference type="GO" id="GO:0003998">
    <property type="term" value="F:acylphosphatase activity"/>
    <property type="evidence" value="ECO:0007669"/>
    <property type="project" value="UniProtKB-EC"/>
</dbReference>
<dbReference type="Gene3D" id="3.30.70.100">
    <property type="match status" value="1"/>
</dbReference>
<dbReference type="InterPro" id="IPR020456">
    <property type="entry name" value="Acylphosphatase"/>
</dbReference>
<dbReference type="InterPro" id="IPR001792">
    <property type="entry name" value="Acylphosphatase-like_dom"/>
</dbReference>
<dbReference type="InterPro" id="IPR036046">
    <property type="entry name" value="Acylphosphatase-like_dom_sf"/>
</dbReference>
<dbReference type="InterPro" id="IPR017968">
    <property type="entry name" value="Acylphosphatase_CS"/>
</dbReference>
<dbReference type="PANTHER" id="PTHR47268">
    <property type="entry name" value="ACYLPHOSPHATASE"/>
    <property type="match status" value="1"/>
</dbReference>
<dbReference type="PANTHER" id="PTHR47268:SF4">
    <property type="entry name" value="ACYLPHOSPHATASE"/>
    <property type="match status" value="1"/>
</dbReference>
<dbReference type="Pfam" id="PF00708">
    <property type="entry name" value="Acylphosphatase"/>
    <property type="match status" value="1"/>
</dbReference>
<dbReference type="SUPFAM" id="SSF54975">
    <property type="entry name" value="Acylphosphatase/BLUF domain-like"/>
    <property type="match status" value="1"/>
</dbReference>
<dbReference type="PROSITE" id="PS00150">
    <property type="entry name" value="ACYLPHOSPHATASE_1"/>
    <property type="match status" value="1"/>
</dbReference>
<dbReference type="PROSITE" id="PS51160">
    <property type="entry name" value="ACYLPHOSPHATASE_3"/>
    <property type="match status" value="1"/>
</dbReference>
<sequence length="95" mass="10288">MGSGVRVRVIVKGIVQGVGFRSFIRRHATALGLTGYVRNLPDGESVEIVVSGPEDRVNELIKLAKRGPPAAVVDSVEVEPYEGVEDFTGFSVRYD</sequence>
<evidence type="ECO:0000255" key="1">
    <source>
        <dbReference type="PROSITE-ProRule" id="PRU00520"/>
    </source>
</evidence>
<evidence type="ECO:0000305" key="2"/>
<name>ACYP_CALMQ</name>
<feature type="chain" id="PRO_0000326856" description="Acylphosphatase">
    <location>
        <begin position="1"/>
        <end position="95"/>
    </location>
</feature>
<feature type="domain" description="Acylphosphatase-like" evidence="1">
    <location>
        <begin position="6"/>
        <end position="94"/>
    </location>
</feature>
<feature type="active site" evidence="1">
    <location>
        <position position="21"/>
    </location>
</feature>
<feature type="active site" evidence="1">
    <location>
        <position position="39"/>
    </location>
</feature>
<organism>
    <name type="scientific">Caldivirga maquilingensis (strain ATCC 700844 / DSM 13496 / JCM 10307 / IC-167)</name>
    <dbReference type="NCBI Taxonomy" id="397948"/>
    <lineage>
        <taxon>Archaea</taxon>
        <taxon>Thermoproteota</taxon>
        <taxon>Thermoprotei</taxon>
        <taxon>Thermoproteales</taxon>
        <taxon>Thermoproteaceae</taxon>
        <taxon>Caldivirga</taxon>
    </lineage>
</organism>
<reference key="1">
    <citation type="submission" date="2007-10" db="EMBL/GenBank/DDBJ databases">
        <title>Complete sequence of Caldivirga maquilingensis IC-167.</title>
        <authorList>
            <consortium name="US DOE Joint Genome Institute"/>
            <person name="Copeland A."/>
            <person name="Lucas S."/>
            <person name="Lapidus A."/>
            <person name="Barry K."/>
            <person name="Glavina del Rio T."/>
            <person name="Dalin E."/>
            <person name="Tice H."/>
            <person name="Pitluck S."/>
            <person name="Saunders E."/>
            <person name="Brettin T."/>
            <person name="Bruce D."/>
            <person name="Detter J.C."/>
            <person name="Han C."/>
            <person name="Schmutz J."/>
            <person name="Larimer F."/>
            <person name="Land M."/>
            <person name="Hauser L."/>
            <person name="Kyrpides N."/>
            <person name="Ivanova N."/>
            <person name="Biddle J.F."/>
            <person name="Zhang Z."/>
            <person name="Fitz-Gibbon S.T."/>
            <person name="Lowe T.M."/>
            <person name="Saltikov C."/>
            <person name="House C.H."/>
            <person name="Richardson P."/>
        </authorList>
    </citation>
    <scope>NUCLEOTIDE SEQUENCE [LARGE SCALE GENOMIC DNA]</scope>
    <source>
        <strain>ATCC 700844 / DSM 13496 / JCM 10307 / IC-167</strain>
    </source>
</reference>
<proteinExistence type="inferred from homology"/>
<keyword id="KW-0378">Hydrolase</keyword>
<keyword id="KW-1185">Reference proteome</keyword>
<gene>
    <name type="primary">acyP</name>
    <name type="ordered locus">Cmaq_1977</name>
</gene>
<accession>A8MC09</accession>
<protein>
    <recommendedName>
        <fullName>Acylphosphatase</fullName>
        <ecNumber>3.6.1.7</ecNumber>
    </recommendedName>
    <alternativeName>
        <fullName>Acylphosphate phosphohydrolase</fullName>
    </alternativeName>
</protein>
<comment type="catalytic activity">
    <reaction>
        <text>an acyl phosphate + H2O = a carboxylate + phosphate + H(+)</text>
        <dbReference type="Rhea" id="RHEA:14965"/>
        <dbReference type="ChEBI" id="CHEBI:15377"/>
        <dbReference type="ChEBI" id="CHEBI:15378"/>
        <dbReference type="ChEBI" id="CHEBI:29067"/>
        <dbReference type="ChEBI" id="CHEBI:43474"/>
        <dbReference type="ChEBI" id="CHEBI:59918"/>
        <dbReference type="EC" id="3.6.1.7"/>
    </reaction>
</comment>
<comment type="similarity">
    <text evidence="2">Belongs to the acylphosphatase family.</text>
</comment>